<feature type="chain" id="PRO_0000439044" description="tRNA (guanine(37)-N(1))/4-demethylwyosine(37)-methyltransferase Taw22">
    <location>
        <begin position="1"/>
        <end position="297"/>
    </location>
</feature>
<feature type="binding site" evidence="2">
    <location>
        <position position="89"/>
    </location>
    <ligand>
        <name>S-adenosyl-L-methionine</name>
        <dbReference type="ChEBI" id="CHEBI:59789"/>
    </ligand>
</feature>
<feature type="binding site" evidence="1">
    <location>
        <position position="106"/>
    </location>
    <ligand>
        <name>S-adenosyl-L-methionine</name>
        <dbReference type="ChEBI" id="CHEBI:59789"/>
    </ligand>
</feature>
<feature type="binding site" evidence="2">
    <location>
        <begin position="128"/>
        <end position="129"/>
    </location>
    <ligand>
        <name>S-adenosyl-L-methionine</name>
        <dbReference type="ChEBI" id="CHEBI:59789"/>
    </ligand>
</feature>
<keyword id="KW-0963">Cytoplasm</keyword>
<keyword id="KW-0489">Methyltransferase</keyword>
<keyword id="KW-1185">Reference proteome</keyword>
<keyword id="KW-0949">S-adenosyl-L-methionine</keyword>
<keyword id="KW-0808">Transferase</keyword>
<keyword id="KW-0819">tRNA processing</keyword>
<comment type="function">
    <text evidence="3">Catalyzes both the N1-methylation of guanosine and the C7-methylation of 4-demethylwyosine (imG-14) at position 37 in tRNA(Phe).</text>
</comment>
<comment type="catalytic activity">
    <reaction evidence="3">
        <text>guanosine(37) in tRNA + S-adenosyl-L-methionine = N(1)-methylguanosine(37) in tRNA + S-adenosyl-L-homocysteine + H(+)</text>
        <dbReference type="Rhea" id="RHEA:36899"/>
        <dbReference type="Rhea" id="RHEA-COMP:10145"/>
        <dbReference type="Rhea" id="RHEA-COMP:10147"/>
        <dbReference type="ChEBI" id="CHEBI:15378"/>
        <dbReference type="ChEBI" id="CHEBI:57856"/>
        <dbReference type="ChEBI" id="CHEBI:59789"/>
        <dbReference type="ChEBI" id="CHEBI:73542"/>
        <dbReference type="ChEBI" id="CHEBI:74269"/>
        <dbReference type="EC" id="2.1.1.228"/>
    </reaction>
</comment>
<comment type="catalytic activity">
    <reaction evidence="3">
        <text>4-demethylwyosine(37) in tRNA(Phe) + S-adenosyl-L-methionine = isowyosine(37) in tRNA(Phe) + S-adenosyl-L-homocysteine + H(+)</text>
        <dbReference type="Rhea" id="RHEA:53056"/>
        <dbReference type="Rhea" id="RHEA-COMP:10164"/>
        <dbReference type="Rhea" id="RHEA-COMP:13445"/>
        <dbReference type="ChEBI" id="CHEBI:15378"/>
        <dbReference type="ChEBI" id="CHEBI:57856"/>
        <dbReference type="ChEBI" id="CHEBI:59789"/>
        <dbReference type="ChEBI" id="CHEBI:64315"/>
        <dbReference type="ChEBI" id="CHEBI:136979"/>
    </reaction>
</comment>
<comment type="subcellular location">
    <subcellularLocation>
        <location evidence="5">Cytoplasm</location>
    </subcellularLocation>
</comment>
<comment type="similarity">
    <text evidence="2">Belongs to the class I-like SAM-binding methyltransferase superfamily. TRM5/TYW2 family.</text>
</comment>
<organism>
    <name type="scientific">Nanoarchaeum equitans (strain Kin4-M)</name>
    <dbReference type="NCBI Taxonomy" id="228908"/>
    <lineage>
        <taxon>Archaea</taxon>
        <taxon>Nanobdellota</taxon>
        <taxon>Candidatus Nanoarchaeia</taxon>
        <taxon>Nanoarchaeales</taxon>
        <taxon>Nanoarchaeaceae</taxon>
        <taxon>Nanoarchaeum</taxon>
    </lineage>
</organism>
<gene>
    <name evidence="4" type="primary">taw22</name>
    <name evidence="6" type="ordered locus">NEQ228</name>
</gene>
<proteinExistence type="evidence at protein level"/>
<protein>
    <recommendedName>
        <fullName evidence="5">tRNA (guanine(37)-N(1))/4-demethylwyosine(37)-methyltransferase Taw22</fullName>
        <ecNumber evidence="3">2.1.1.-</ecNumber>
        <ecNumber evidence="3">2.1.1.228</ecNumber>
    </recommendedName>
    <alternativeName>
        <fullName evidence="4">tRNA(Phe):m1G/imG2 methyltransferase</fullName>
    </alternativeName>
</protein>
<dbReference type="EC" id="2.1.1.-" evidence="3"/>
<dbReference type="EC" id="2.1.1.228" evidence="3"/>
<dbReference type="EMBL" id="AE017199">
    <property type="protein sequence ID" value="AAR39082.1"/>
    <property type="molecule type" value="Genomic_DNA"/>
</dbReference>
<dbReference type="SMR" id="Q74NE4"/>
<dbReference type="STRING" id="228908.NEQ228"/>
<dbReference type="EnsemblBacteria" id="AAR39082">
    <property type="protein sequence ID" value="AAR39082"/>
    <property type="gene ID" value="NEQ228"/>
</dbReference>
<dbReference type="KEGG" id="neq:NEQ228"/>
<dbReference type="PATRIC" id="fig|228908.8.peg.234"/>
<dbReference type="HOGENOM" id="CLU_022610_0_0_2"/>
<dbReference type="BRENDA" id="2.1.1.228">
    <property type="organism ID" value="8261"/>
</dbReference>
<dbReference type="BRENDA" id="2.1.1.282">
    <property type="organism ID" value="8261"/>
</dbReference>
<dbReference type="Proteomes" id="UP000000578">
    <property type="component" value="Chromosome"/>
</dbReference>
<dbReference type="GO" id="GO:0005737">
    <property type="term" value="C:cytoplasm"/>
    <property type="evidence" value="ECO:0007669"/>
    <property type="project" value="UniProtKB-SubCell"/>
</dbReference>
<dbReference type="GO" id="GO:0052906">
    <property type="term" value="F:tRNA (guanine(37)-N1)-methyltransferase activity"/>
    <property type="evidence" value="ECO:0007669"/>
    <property type="project" value="UniProtKB-EC"/>
</dbReference>
<dbReference type="GO" id="GO:0002939">
    <property type="term" value="P:tRNA N1-guanine methylation"/>
    <property type="evidence" value="ECO:0007669"/>
    <property type="project" value="TreeGrafter"/>
</dbReference>
<dbReference type="Gene3D" id="3.30.300.110">
    <property type="entry name" value="Met-10+ protein-like domains"/>
    <property type="match status" value="1"/>
</dbReference>
<dbReference type="Gene3D" id="3.40.50.150">
    <property type="entry name" value="Vaccinia Virus protein VP39"/>
    <property type="match status" value="1"/>
</dbReference>
<dbReference type="InterPro" id="IPR030382">
    <property type="entry name" value="MeTrfase_TRM5/TYW2"/>
</dbReference>
<dbReference type="InterPro" id="IPR029063">
    <property type="entry name" value="SAM-dependent_MTases_sf"/>
</dbReference>
<dbReference type="InterPro" id="IPR056743">
    <property type="entry name" value="TRM5-TYW2-like_MTfase"/>
</dbReference>
<dbReference type="PANTHER" id="PTHR23245:SF36">
    <property type="entry name" value="TRNA (GUANINE(37)-N1)-METHYLTRANSFERASE"/>
    <property type="match status" value="1"/>
</dbReference>
<dbReference type="PANTHER" id="PTHR23245">
    <property type="entry name" value="TRNA METHYLTRANSFERASE"/>
    <property type="match status" value="1"/>
</dbReference>
<dbReference type="Pfam" id="PF02475">
    <property type="entry name" value="TRM5-TYW2_MTfase"/>
    <property type="match status" value="1"/>
</dbReference>
<dbReference type="SUPFAM" id="SSF53335">
    <property type="entry name" value="S-adenosyl-L-methionine-dependent methyltransferases"/>
    <property type="match status" value="1"/>
</dbReference>
<dbReference type="PROSITE" id="PS51684">
    <property type="entry name" value="SAM_MT_TRM5_TYW2"/>
    <property type="match status" value="1"/>
</dbReference>
<reference key="1">
    <citation type="journal article" date="2003" name="Proc. Natl. Acad. Sci. U.S.A.">
        <title>The genome of Nanoarchaeum equitans: insights into early archaeal evolution and derived parasitism.</title>
        <authorList>
            <person name="Waters E."/>
            <person name="Hohn M.J."/>
            <person name="Ahel I."/>
            <person name="Graham D.E."/>
            <person name="Adams M.D."/>
            <person name="Barnstead M."/>
            <person name="Beeson K.Y."/>
            <person name="Bibbs L."/>
            <person name="Bolanos R."/>
            <person name="Keller M."/>
            <person name="Kretz K."/>
            <person name="Lin X."/>
            <person name="Mathur E."/>
            <person name="Ni J."/>
            <person name="Podar M."/>
            <person name="Richardson T."/>
            <person name="Sutton G.G."/>
            <person name="Simon M."/>
            <person name="Soell D."/>
            <person name="Stetter K.O."/>
            <person name="Short J.M."/>
            <person name="Noorderwier M."/>
        </authorList>
    </citation>
    <scope>NUCLEOTIDE SEQUENCE [LARGE SCALE GENOMIC DNA]</scope>
    <source>
        <strain>Kin4-M</strain>
    </source>
</reference>
<reference key="2">
    <citation type="journal article" date="2016" name="RNA">
        <title>Evolution of tRNAPhe:imG2 methyltransferases involved in the biosynthesis of wyosine derivatives in Archaea.</title>
        <authorList>
            <person name="Urbonavicius J."/>
            <person name="Rutkiene R."/>
            <person name="Lopato A."/>
            <person name="Tauraite D."/>
            <person name="Stankeviciute J."/>
            <person name="Aucynaite A."/>
            <person name="Kaliniene L."/>
            <person name="van Tilbeurgh H."/>
            <person name="Meskys R."/>
        </authorList>
    </citation>
    <scope>FUNCTION</scope>
    <scope>CATALYTIC ACTIVITY</scope>
</reference>
<accession>Q74NE4</accession>
<sequence>MSYDIIGEIAIIYPPVDDLDKIVNKILKHHKYVKAIYLKTDKLETELRLPKLKLLYGEPILETTYKENKCVFKLRVDKVYFSPRLSTERKEFIDLVKDNEKILIPFAGVNPYPIVIAKHRKVQIKSIELNPWAVKYGIINTKLNKVNVDTILADFGIAWKYIRNLHNKEGIVTKYVNELLKAKPELDLVYTNEEYYDLLNQYYNTKLIEELKPGIEYFDRIIMPLPKGGEHFIFEALVLAKKYIHLYSFAHEKEIEQKVKEIIDIASQLREIKHYDYKIVGDIGVRKYRIRINIYLI</sequence>
<evidence type="ECO:0000250" key="1">
    <source>
        <dbReference type="UniProtKB" id="Q9V2G1"/>
    </source>
</evidence>
<evidence type="ECO:0000255" key="2">
    <source>
        <dbReference type="PROSITE-ProRule" id="PRU01021"/>
    </source>
</evidence>
<evidence type="ECO:0000269" key="3">
    <source>
    </source>
</evidence>
<evidence type="ECO:0000303" key="4">
    <source>
    </source>
</evidence>
<evidence type="ECO:0000305" key="5"/>
<evidence type="ECO:0000312" key="6">
    <source>
        <dbReference type="EMBL" id="AAR39082.1"/>
    </source>
</evidence>
<name>TAW22_NANEQ</name>